<organism>
    <name type="scientific">Agrobacterium fabrum (strain C58 / ATCC 33970)</name>
    <name type="common">Agrobacterium tumefaciens (strain C58)</name>
    <dbReference type="NCBI Taxonomy" id="176299"/>
    <lineage>
        <taxon>Bacteria</taxon>
        <taxon>Pseudomonadati</taxon>
        <taxon>Pseudomonadota</taxon>
        <taxon>Alphaproteobacteria</taxon>
        <taxon>Hyphomicrobiales</taxon>
        <taxon>Rhizobiaceae</taxon>
        <taxon>Rhizobium/Agrobacterium group</taxon>
        <taxon>Agrobacterium</taxon>
        <taxon>Agrobacterium tumefaciens complex</taxon>
    </lineage>
</organism>
<comment type="function">
    <text evidence="1">Key component of the proton channel; it plays a direct role in the translocation of protons across the membrane.</text>
</comment>
<comment type="subunit">
    <text evidence="1">F-type ATPases have 2 components, CF(1) - the catalytic core - and CF(0) - the membrane proton channel. CF(1) has five subunits: alpha(3), beta(3), gamma(1), delta(1), epsilon(1). CF(0) has three main subunits: a(1), b(2) and c(9-12). The alpha and beta chains form an alternating ring which encloses part of the gamma chain. CF(1) is attached to CF(0) by a central stalk formed by the gamma and epsilon chains, while a peripheral stalk is formed by the delta and b chains.</text>
</comment>
<comment type="subcellular location">
    <subcellularLocation>
        <location evidence="1">Cell inner membrane</location>
        <topology evidence="1">Multi-pass membrane protein</topology>
    </subcellularLocation>
</comment>
<comment type="similarity">
    <text evidence="1">Belongs to the ATPase A chain family.</text>
</comment>
<dbReference type="EMBL" id="AE007869">
    <property type="protein sequence ID" value="AAK86524.1"/>
    <property type="molecule type" value="Genomic_DNA"/>
</dbReference>
<dbReference type="PIR" id="AD2664">
    <property type="entry name" value="AD2664"/>
</dbReference>
<dbReference type="PIR" id="C97446">
    <property type="entry name" value="C97446"/>
</dbReference>
<dbReference type="RefSeq" id="NP_353739.1">
    <property type="nucleotide sequence ID" value="NC_003062.2"/>
</dbReference>
<dbReference type="RefSeq" id="WP_006309767.1">
    <property type="nucleotide sequence ID" value="NC_003062.2"/>
</dbReference>
<dbReference type="SMR" id="A9CK03"/>
<dbReference type="STRING" id="176299.Atu0714"/>
<dbReference type="EnsemblBacteria" id="AAK86524">
    <property type="protein sequence ID" value="AAK86524"/>
    <property type="gene ID" value="Atu0714"/>
</dbReference>
<dbReference type="GeneID" id="1132752"/>
<dbReference type="KEGG" id="atu:Atu0714"/>
<dbReference type="PATRIC" id="fig|176299.10.peg.712"/>
<dbReference type="eggNOG" id="COG0356">
    <property type="taxonomic scope" value="Bacteria"/>
</dbReference>
<dbReference type="HOGENOM" id="CLU_041018_0_2_5"/>
<dbReference type="OrthoDB" id="9809130at2"/>
<dbReference type="PhylomeDB" id="A9CK03"/>
<dbReference type="BioCyc" id="AGRO:ATU0714-MONOMER"/>
<dbReference type="Proteomes" id="UP000000813">
    <property type="component" value="Chromosome circular"/>
</dbReference>
<dbReference type="GO" id="GO:0005886">
    <property type="term" value="C:plasma membrane"/>
    <property type="evidence" value="ECO:0007669"/>
    <property type="project" value="UniProtKB-SubCell"/>
</dbReference>
<dbReference type="GO" id="GO:0045259">
    <property type="term" value="C:proton-transporting ATP synthase complex"/>
    <property type="evidence" value="ECO:0007669"/>
    <property type="project" value="UniProtKB-KW"/>
</dbReference>
<dbReference type="GO" id="GO:0046933">
    <property type="term" value="F:proton-transporting ATP synthase activity, rotational mechanism"/>
    <property type="evidence" value="ECO:0007669"/>
    <property type="project" value="UniProtKB-UniRule"/>
</dbReference>
<dbReference type="CDD" id="cd00310">
    <property type="entry name" value="ATP-synt_Fo_a_6"/>
    <property type="match status" value="1"/>
</dbReference>
<dbReference type="FunFam" id="1.20.120.220:FF:000003">
    <property type="entry name" value="ATP synthase subunit a"/>
    <property type="match status" value="1"/>
</dbReference>
<dbReference type="Gene3D" id="1.20.120.220">
    <property type="entry name" value="ATP synthase, F0 complex, subunit A"/>
    <property type="match status" value="1"/>
</dbReference>
<dbReference type="HAMAP" id="MF_01393">
    <property type="entry name" value="ATP_synth_a_bact"/>
    <property type="match status" value="1"/>
</dbReference>
<dbReference type="InterPro" id="IPR000568">
    <property type="entry name" value="ATP_synth_F0_asu"/>
</dbReference>
<dbReference type="InterPro" id="IPR023011">
    <property type="entry name" value="ATP_synth_F0_asu_AS"/>
</dbReference>
<dbReference type="InterPro" id="IPR045083">
    <property type="entry name" value="ATP_synth_F0_asu_bact/mt"/>
</dbReference>
<dbReference type="InterPro" id="IPR035908">
    <property type="entry name" value="F0_ATP_A_sf"/>
</dbReference>
<dbReference type="NCBIfam" id="TIGR01131">
    <property type="entry name" value="ATP_synt_6_or_A"/>
    <property type="match status" value="1"/>
</dbReference>
<dbReference type="NCBIfam" id="NF004482">
    <property type="entry name" value="PRK05815.2-4"/>
    <property type="match status" value="1"/>
</dbReference>
<dbReference type="PANTHER" id="PTHR11410">
    <property type="entry name" value="ATP SYNTHASE SUBUNIT A"/>
    <property type="match status" value="1"/>
</dbReference>
<dbReference type="PANTHER" id="PTHR11410:SF0">
    <property type="entry name" value="ATP SYNTHASE SUBUNIT A"/>
    <property type="match status" value="1"/>
</dbReference>
<dbReference type="Pfam" id="PF00119">
    <property type="entry name" value="ATP-synt_A"/>
    <property type="match status" value="1"/>
</dbReference>
<dbReference type="PRINTS" id="PR00123">
    <property type="entry name" value="ATPASEA"/>
</dbReference>
<dbReference type="SUPFAM" id="SSF81336">
    <property type="entry name" value="F1F0 ATP synthase subunit A"/>
    <property type="match status" value="1"/>
</dbReference>
<dbReference type="PROSITE" id="PS00449">
    <property type="entry name" value="ATPASE_A"/>
    <property type="match status" value="1"/>
</dbReference>
<proteinExistence type="inferred from homology"/>
<gene>
    <name evidence="1" type="primary">atpB</name>
    <name type="ordered locus">Atu0714</name>
    <name type="ORF">AGR_C_1295</name>
</gene>
<protein>
    <recommendedName>
        <fullName evidence="1">ATP synthase subunit a</fullName>
    </recommendedName>
    <alternativeName>
        <fullName evidence="1">ATP synthase F0 sector subunit a</fullName>
    </alternativeName>
    <alternativeName>
        <fullName evidence="1">F-ATPase subunit 6</fullName>
    </alternativeName>
</protein>
<keyword id="KW-0066">ATP synthesis</keyword>
<keyword id="KW-0997">Cell inner membrane</keyword>
<keyword id="KW-1003">Cell membrane</keyword>
<keyword id="KW-0138">CF(0)</keyword>
<keyword id="KW-0375">Hydrogen ion transport</keyword>
<keyword id="KW-0406">Ion transport</keyword>
<keyword id="KW-0472">Membrane</keyword>
<keyword id="KW-1185">Reference proteome</keyword>
<keyword id="KW-0812">Transmembrane</keyword>
<keyword id="KW-1133">Transmembrane helix</keyword>
<keyword id="KW-0813">Transport</keyword>
<evidence type="ECO:0000255" key="1">
    <source>
        <dbReference type="HAMAP-Rule" id="MF_01393"/>
    </source>
</evidence>
<name>ATP6_AGRFC</name>
<sequence length="249" mass="26778">MANDPTHQFLVQPIIPIEIGGVDFSFTNASLFMVATVAAASGFLYFATSNRGLIPTRMQSVAEMSYEFIASMLREGAGKKGMVFFPFVFSLFMFVLTANLLGMFPYFFTVTSQIIVTFALACLVIGTVIVYGFYKHGLHFFGIFAPSGVPKALLPLVASIEMISFLSRPISLSVRLFANMLAGHITLKVFAGFVASMGALGALGVGGAVLPLIMTVAMTALEFLVAFLQAYVFAVLTCMYLNDAVHGGH</sequence>
<feature type="chain" id="PRO_0000362229" description="ATP synthase subunit a">
    <location>
        <begin position="1"/>
        <end position="249"/>
    </location>
</feature>
<feature type="transmembrane region" description="Helical" evidence="1">
    <location>
        <begin position="29"/>
        <end position="49"/>
    </location>
</feature>
<feature type="transmembrane region" description="Helical" evidence="1">
    <location>
        <begin position="84"/>
        <end position="104"/>
    </location>
</feature>
<feature type="transmembrane region" description="Helical" evidence="1">
    <location>
        <begin position="114"/>
        <end position="134"/>
    </location>
</feature>
<feature type="transmembrane region" description="Helical" evidence="1">
    <location>
        <begin position="140"/>
        <end position="160"/>
    </location>
</feature>
<feature type="transmembrane region" description="Helical" evidence="1">
    <location>
        <begin position="193"/>
        <end position="213"/>
    </location>
</feature>
<feature type="transmembrane region" description="Helical" evidence="1">
    <location>
        <begin position="216"/>
        <end position="236"/>
    </location>
</feature>
<accession>A9CK03</accession>
<reference key="1">
    <citation type="journal article" date="2001" name="Science">
        <title>Genome sequence of the plant pathogen and biotechnology agent Agrobacterium tumefaciens C58.</title>
        <authorList>
            <person name="Goodner B."/>
            <person name="Hinkle G."/>
            <person name="Gattung S."/>
            <person name="Miller N."/>
            <person name="Blanchard M."/>
            <person name="Qurollo B."/>
            <person name="Goldman B.S."/>
            <person name="Cao Y."/>
            <person name="Askenazi M."/>
            <person name="Halling C."/>
            <person name="Mullin L."/>
            <person name="Houmiel K."/>
            <person name="Gordon J."/>
            <person name="Vaudin M."/>
            <person name="Iartchouk O."/>
            <person name="Epp A."/>
            <person name="Liu F."/>
            <person name="Wollam C."/>
            <person name="Allinger M."/>
            <person name="Doughty D."/>
            <person name="Scott C."/>
            <person name="Lappas C."/>
            <person name="Markelz B."/>
            <person name="Flanagan C."/>
            <person name="Crowell C."/>
            <person name="Gurson J."/>
            <person name="Lomo C."/>
            <person name="Sear C."/>
            <person name="Strub G."/>
            <person name="Cielo C."/>
            <person name="Slater S."/>
        </authorList>
    </citation>
    <scope>NUCLEOTIDE SEQUENCE [LARGE SCALE GENOMIC DNA]</scope>
    <source>
        <strain>C58 / ATCC 33970</strain>
    </source>
</reference>
<reference key="2">
    <citation type="journal article" date="2001" name="Science">
        <title>The genome of the natural genetic engineer Agrobacterium tumefaciens C58.</title>
        <authorList>
            <person name="Wood D.W."/>
            <person name="Setubal J.C."/>
            <person name="Kaul R."/>
            <person name="Monks D.E."/>
            <person name="Kitajima J.P."/>
            <person name="Okura V.K."/>
            <person name="Zhou Y."/>
            <person name="Chen L."/>
            <person name="Wood G.E."/>
            <person name="Almeida N.F. Jr."/>
            <person name="Woo L."/>
            <person name="Chen Y."/>
            <person name="Paulsen I.T."/>
            <person name="Eisen J.A."/>
            <person name="Karp P.D."/>
            <person name="Bovee D. Sr."/>
            <person name="Chapman P."/>
            <person name="Clendenning J."/>
            <person name="Deatherage G."/>
            <person name="Gillet W."/>
            <person name="Grant C."/>
            <person name="Kutyavin T."/>
            <person name="Levy R."/>
            <person name="Li M.-J."/>
            <person name="McClelland E."/>
            <person name="Palmieri A."/>
            <person name="Raymond C."/>
            <person name="Rouse G."/>
            <person name="Saenphimmachak C."/>
            <person name="Wu Z."/>
            <person name="Romero P."/>
            <person name="Gordon D."/>
            <person name="Zhang S."/>
            <person name="Yoo H."/>
            <person name="Tao Y."/>
            <person name="Biddle P."/>
            <person name="Jung M."/>
            <person name="Krespan W."/>
            <person name="Perry M."/>
            <person name="Gordon-Kamm B."/>
            <person name="Liao L."/>
            <person name="Kim S."/>
            <person name="Hendrick C."/>
            <person name="Zhao Z.-Y."/>
            <person name="Dolan M."/>
            <person name="Chumley F."/>
            <person name="Tingey S.V."/>
            <person name="Tomb J.-F."/>
            <person name="Gordon M.P."/>
            <person name="Olson M.V."/>
            <person name="Nester E.W."/>
        </authorList>
    </citation>
    <scope>NUCLEOTIDE SEQUENCE [LARGE SCALE GENOMIC DNA]</scope>
    <source>
        <strain>C58 / ATCC 33970</strain>
    </source>
</reference>